<evidence type="ECO:0000255" key="1">
    <source>
        <dbReference type="HAMAP-Rule" id="MF_01685"/>
    </source>
</evidence>
<protein>
    <recommendedName>
        <fullName evidence="1">Ferredoxin--NADP reductase</fullName>
        <shortName evidence="1">FNR</shortName>
        <shortName evidence="1">Fd-NADP(+) reductase</shortName>
        <ecNumber evidence="1">1.18.1.2</ecNumber>
    </recommendedName>
</protein>
<keyword id="KW-0274">FAD</keyword>
<keyword id="KW-0285">Flavoprotein</keyword>
<keyword id="KW-0521">NADP</keyword>
<keyword id="KW-0560">Oxidoreductase</keyword>
<keyword id="KW-1185">Reference proteome</keyword>
<sequence length="327" mass="34374">MTPVPGEVDLLVVGAGPTGLFAAYYAGFRGMSVAVVDALPEPGGQVTAMYPEKMIYDVAGFPEVRGRDLVDALVRQAAQYDPVYLLGRHAEKLSEVEGGLLVDVGERESVRAGAVLVTAGIGEFTPRPLPAADDWLGRGVVHFIPELGAHSGQDVVVVGGGDSAFDWALALHPVARSVTLVHRRARFRAHAGLVDKVRGLGVPLITDAEVAEIRGDDAGPHEVELALAGDRRQVLPAQAVVAALGFTADLGPIESWGLELEKRTIRVDSTMRTSRERVYAAGDVAAYPGKVKLIATGFGEAATAVNNIAVALNPEAHLFPGHSSNMG</sequence>
<proteinExistence type="inferred from homology"/>
<reference key="1">
    <citation type="journal article" date="2007" name="Nat. Biotechnol.">
        <title>Complete genome sequence of the erythromycin-producing bacterium Saccharopolyspora erythraea NRRL23338.</title>
        <authorList>
            <person name="Oliynyk M."/>
            <person name="Samborskyy M."/>
            <person name="Lester J.B."/>
            <person name="Mironenko T."/>
            <person name="Scott N."/>
            <person name="Dickens S."/>
            <person name="Haydock S.F."/>
            <person name="Leadlay P.F."/>
        </authorList>
    </citation>
    <scope>NUCLEOTIDE SEQUENCE [LARGE SCALE GENOMIC DNA]</scope>
    <source>
        <strain>ATCC 11635 / DSM 40517 / JCM 4748 / NBRC 13426 / NCIMB 8594 / NRRL 2338</strain>
    </source>
</reference>
<name>FENR_SACEN</name>
<comment type="catalytic activity">
    <reaction evidence="1">
        <text>2 reduced [2Fe-2S]-[ferredoxin] + NADP(+) + H(+) = 2 oxidized [2Fe-2S]-[ferredoxin] + NADPH</text>
        <dbReference type="Rhea" id="RHEA:20125"/>
        <dbReference type="Rhea" id="RHEA-COMP:10000"/>
        <dbReference type="Rhea" id="RHEA-COMP:10001"/>
        <dbReference type="ChEBI" id="CHEBI:15378"/>
        <dbReference type="ChEBI" id="CHEBI:33737"/>
        <dbReference type="ChEBI" id="CHEBI:33738"/>
        <dbReference type="ChEBI" id="CHEBI:57783"/>
        <dbReference type="ChEBI" id="CHEBI:58349"/>
        <dbReference type="EC" id="1.18.1.2"/>
    </reaction>
</comment>
<comment type="cofactor">
    <cofactor evidence="1">
        <name>FAD</name>
        <dbReference type="ChEBI" id="CHEBI:57692"/>
    </cofactor>
    <text evidence="1">Binds 1 FAD per subunit.</text>
</comment>
<comment type="subunit">
    <text evidence="1">Homodimer.</text>
</comment>
<comment type="similarity">
    <text evidence="1">Belongs to the ferredoxin--NADP reductase type 2 family.</text>
</comment>
<gene>
    <name type="ordered locus">SACE_0932</name>
</gene>
<dbReference type="EC" id="1.18.1.2" evidence="1"/>
<dbReference type="EMBL" id="AM420293">
    <property type="protein sequence ID" value="CAM00266.1"/>
    <property type="molecule type" value="Genomic_DNA"/>
</dbReference>
<dbReference type="RefSeq" id="WP_009951032.1">
    <property type="nucleotide sequence ID" value="NC_009142.1"/>
</dbReference>
<dbReference type="SMR" id="A4F891"/>
<dbReference type="STRING" id="405948.SACE_0932"/>
<dbReference type="KEGG" id="sen:SACE_0932"/>
<dbReference type="eggNOG" id="COG0492">
    <property type="taxonomic scope" value="Bacteria"/>
</dbReference>
<dbReference type="HOGENOM" id="CLU_031864_5_5_11"/>
<dbReference type="OrthoDB" id="9806179at2"/>
<dbReference type="Proteomes" id="UP000006728">
    <property type="component" value="Chromosome"/>
</dbReference>
<dbReference type="GO" id="GO:0004324">
    <property type="term" value="F:ferredoxin-NADP+ reductase activity"/>
    <property type="evidence" value="ECO:0007669"/>
    <property type="project" value="UniProtKB-UniRule"/>
</dbReference>
<dbReference type="GO" id="GO:0050660">
    <property type="term" value="F:flavin adenine dinucleotide binding"/>
    <property type="evidence" value="ECO:0007669"/>
    <property type="project" value="UniProtKB-UniRule"/>
</dbReference>
<dbReference type="GO" id="GO:0050661">
    <property type="term" value="F:NADP binding"/>
    <property type="evidence" value="ECO:0007669"/>
    <property type="project" value="UniProtKB-UniRule"/>
</dbReference>
<dbReference type="Gene3D" id="3.50.50.60">
    <property type="entry name" value="FAD/NAD(P)-binding domain"/>
    <property type="match status" value="2"/>
</dbReference>
<dbReference type="HAMAP" id="MF_01685">
    <property type="entry name" value="FENR2"/>
    <property type="match status" value="1"/>
</dbReference>
<dbReference type="InterPro" id="IPR036188">
    <property type="entry name" value="FAD/NAD-bd_sf"/>
</dbReference>
<dbReference type="InterPro" id="IPR023753">
    <property type="entry name" value="FAD/NAD-binding_dom"/>
</dbReference>
<dbReference type="InterPro" id="IPR022890">
    <property type="entry name" value="Fd--NADP_Rdtase_type_2"/>
</dbReference>
<dbReference type="InterPro" id="IPR050097">
    <property type="entry name" value="Ferredoxin-NADP_redctase_2"/>
</dbReference>
<dbReference type="PANTHER" id="PTHR48105">
    <property type="entry name" value="THIOREDOXIN REDUCTASE 1-RELATED-RELATED"/>
    <property type="match status" value="1"/>
</dbReference>
<dbReference type="Pfam" id="PF07992">
    <property type="entry name" value="Pyr_redox_2"/>
    <property type="match status" value="1"/>
</dbReference>
<dbReference type="PRINTS" id="PR00368">
    <property type="entry name" value="FADPNR"/>
</dbReference>
<dbReference type="PRINTS" id="PR00469">
    <property type="entry name" value="PNDRDTASEII"/>
</dbReference>
<dbReference type="SUPFAM" id="SSF51905">
    <property type="entry name" value="FAD/NAD(P)-binding domain"/>
    <property type="match status" value="1"/>
</dbReference>
<accession>A4F891</accession>
<organism>
    <name type="scientific">Saccharopolyspora erythraea (strain ATCC 11635 / DSM 40517 / JCM 4748 / NBRC 13426 / NCIMB 8594 / NRRL 2338)</name>
    <dbReference type="NCBI Taxonomy" id="405948"/>
    <lineage>
        <taxon>Bacteria</taxon>
        <taxon>Bacillati</taxon>
        <taxon>Actinomycetota</taxon>
        <taxon>Actinomycetes</taxon>
        <taxon>Pseudonocardiales</taxon>
        <taxon>Pseudonocardiaceae</taxon>
        <taxon>Saccharopolyspora</taxon>
    </lineage>
</organism>
<feature type="chain" id="PRO_0000364931" description="Ferredoxin--NADP reductase">
    <location>
        <begin position="1"/>
        <end position="327"/>
    </location>
</feature>
<feature type="binding site" evidence="1">
    <location>
        <position position="18"/>
    </location>
    <ligand>
        <name>FAD</name>
        <dbReference type="ChEBI" id="CHEBI:57692"/>
    </ligand>
</feature>
<feature type="binding site" evidence="1">
    <location>
        <position position="37"/>
    </location>
    <ligand>
        <name>FAD</name>
        <dbReference type="ChEBI" id="CHEBI:57692"/>
    </ligand>
</feature>
<feature type="binding site" evidence="1">
    <location>
        <position position="45"/>
    </location>
    <ligand>
        <name>FAD</name>
        <dbReference type="ChEBI" id="CHEBI:57692"/>
    </ligand>
</feature>
<feature type="binding site" evidence="1">
    <location>
        <position position="50"/>
    </location>
    <ligand>
        <name>FAD</name>
        <dbReference type="ChEBI" id="CHEBI:57692"/>
    </ligand>
</feature>
<feature type="binding site" evidence="1">
    <location>
        <position position="90"/>
    </location>
    <ligand>
        <name>FAD</name>
        <dbReference type="ChEBI" id="CHEBI:57692"/>
    </ligand>
</feature>
<feature type="binding site" evidence="1">
    <location>
        <position position="124"/>
    </location>
    <ligand>
        <name>FAD</name>
        <dbReference type="ChEBI" id="CHEBI:57692"/>
    </ligand>
</feature>
<feature type="binding site" evidence="1">
    <location>
        <position position="283"/>
    </location>
    <ligand>
        <name>FAD</name>
        <dbReference type="ChEBI" id="CHEBI:57692"/>
    </ligand>
</feature>
<feature type="binding site" evidence="1">
    <location>
        <position position="324"/>
    </location>
    <ligand>
        <name>FAD</name>
        <dbReference type="ChEBI" id="CHEBI:57692"/>
    </ligand>
</feature>